<keyword id="KW-0963">Cytoplasm</keyword>
<keyword id="KW-0671">Queuosine biosynthesis</keyword>
<keyword id="KW-0949">S-adenosyl-L-methionine</keyword>
<keyword id="KW-0808">Transferase</keyword>
<gene>
    <name evidence="1" type="primary">queA</name>
    <name type="ordered locus">SAS1576</name>
</gene>
<dbReference type="EC" id="2.4.99.17" evidence="1"/>
<dbReference type="EMBL" id="BX571857">
    <property type="protein sequence ID" value="CAG43377.1"/>
    <property type="molecule type" value="Genomic_DNA"/>
</dbReference>
<dbReference type="RefSeq" id="WP_001019178.1">
    <property type="nucleotide sequence ID" value="NC_002953.3"/>
</dbReference>
<dbReference type="SMR" id="Q6G8S9"/>
<dbReference type="KEGG" id="sas:SAS1576"/>
<dbReference type="HOGENOM" id="CLU_039110_1_0_9"/>
<dbReference type="UniPathway" id="UPA00392"/>
<dbReference type="GO" id="GO:0005737">
    <property type="term" value="C:cytoplasm"/>
    <property type="evidence" value="ECO:0007669"/>
    <property type="project" value="UniProtKB-SubCell"/>
</dbReference>
<dbReference type="GO" id="GO:0051075">
    <property type="term" value="F:S-adenosylmethionine:tRNA ribosyltransferase-isomerase activity"/>
    <property type="evidence" value="ECO:0007669"/>
    <property type="project" value="UniProtKB-EC"/>
</dbReference>
<dbReference type="GO" id="GO:0008616">
    <property type="term" value="P:queuosine biosynthetic process"/>
    <property type="evidence" value="ECO:0007669"/>
    <property type="project" value="UniProtKB-UniRule"/>
</dbReference>
<dbReference type="GO" id="GO:0002099">
    <property type="term" value="P:tRNA wobble guanine modification"/>
    <property type="evidence" value="ECO:0007669"/>
    <property type="project" value="TreeGrafter"/>
</dbReference>
<dbReference type="FunFam" id="2.40.10.240:FF:000002">
    <property type="entry name" value="S-adenosylmethionine:tRNA ribosyltransferase-isomerase"/>
    <property type="match status" value="1"/>
</dbReference>
<dbReference type="FunFam" id="3.40.1780.10:FF:000001">
    <property type="entry name" value="S-adenosylmethionine:tRNA ribosyltransferase-isomerase"/>
    <property type="match status" value="1"/>
</dbReference>
<dbReference type="Gene3D" id="2.40.10.240">
    <property type="entry name" value="QueA-like"/>
    <property type="match status" value="1"/>
</dbReference>
<dbReference type="Gene3D" id="3.40.1780.10">
    <property type="entry name" value="QueA-like"/>
    <property type="match status" value="1"/>
</dbReference>
<dbReference type="HAMAP" id="MF_00113">
    <property type="entry name" value="QueA"/>
    <property type="match status" value="1"/>
</dbReference>
<dbReference type="InterPro" id="IPR003699">
    <property type="entry name" value="QueA"/>
</dbReference>
<dbReference type="InterPro" id="IPR042118">
    <property type="entry name" value="QueA_dom1"/>
</dbReference>
<dbReference type="InterPro" id="IPR042119">
    <property type="entry name" value="QueA_dom2"/>
</dbReference>
<dbReference type="InterPro" id="IPR036100">
    <property type="entry name" value="QueA_sf"/>
</dbReference>
<dbReference type="NCBIfam" id="NF001140">
    <property type="entry name" value="PRK00147.1"/>
    <property type="match status" value="1"/>
</dbReference>
<dbReference type="NCBIfam" id="TIGR00113">
    <property type="entry name" value="queA"/>
    <property type="match status" value="1"/>
</dbReference>
<dbReference type="PANTHER" id="PTHR30307">
    <property type="entry name" value="S-ADENOSYLMETHIONINE:TRNA RIBOSYLTRANSFERASE-ISOMERASE"/>
    <property type="match status" value="1"/>
</dbReference>
<dbReference type="PANTHER" id="PTHR30307:SF0">
    <property type="entry name" value="S-ADENOSYLMETHIONINE:TRNA RIBOSYLTRANSFERASE-ISOMERASE"/>
    <property type="match status" value="1"/>
</dbReference>
<dbReference type="Pfam" id="PF02547">
    <property type="entry name" value="Queuosine_synth"/>
    <property type="match status" value="1"/>
</dbReference>
<dbReference type="SUPFAM" id="SSF111337">
    <property type="entry name" value="QueA-like"/>
    <property type="match status" value="1"/>
</dbReference>
<organism>
    <name type="scientific">Staphylococcus aureus (strain MSSA476)</name>
    <dbReference type="NCBI Taxonomy" id="282459"/>
    <lineage>
        <taxon>Bacteria</taxon>
        <taxon>Bacillati</taxon>
        <taxon>Bacillota</taxon>
        <taxon>Bacilli</taxon>
        <taxon>Bacillales</taxon>
        <taxon>Staphylococcaceae</taxon>
        <taxon>Staphylococcus</taxon>
    </lineage>
</organism>
<accession>Q6G8S9</accession>
<protein>
    <recommendedName>
        <fullName evidence="1">S-adenosylmethionine:tRNA ribosyltransferase-isomerase</fullName>
        <ecNumber evidence="1">2.4.99.17</ecNumber>
    </recommendedName>
    <alternativeName>
        <fullName evidence="1">Queuosine biosynthesis protein QueA</fullName>
    </alternativeName>
</protein>
<name>QUEA_STAAS</name>
<evidence type="ECO:0000255" key="1">
    <source>
        <dbReference type="HAMAP-Rule" id="MF_00113"/>
    </source>
</evidence>
<feature type="chain" id="PRO_0000165442" description="S-adenosylmethionine:tRNA ribosyltransferase-isomerase">
    <location>
        <begin position="1"/>
        <end position="341"/>
    </location>
</feature>
<reference key="1">
    <citation type="journal article" date="2004" name="Proc. Natl. Acad. Sci. U.S.A.">
        <title>Complete genomes of two clinical Staphylococcus aureus strains: evidence for the rapid evolution of virulence and drug resistance.</title>
        <authorList>
            <person name="Holden M.T.G."/>
            <person name="Feil E.J."/>
            <person name="Lindsay J.A."/>
            <person name="Peacock S.J."/>
            <person name="Day N.P.J."/>
            <person name="Enright M.C."/>
            <person name="Foster T.J."/>
            <person name="Moore C.E."/>
            <person name="Hurst L."/>
            <person name="Atkin R."/>
            <person name="Barron A."/>
            <person name="Bason N."/>
            <person name="Bentley S.D."/>
            <person name="Chillingworth C."/>
            <person name="Chillingworth T."/>
            <person name="Churcher C."/>
            <person name="Clark L."/>
            <person name="Corton C."/>
            <person name="Cronin A."/>
            <person name="Doggett J."/>
            <person name="Dowd L."/>
            <person name="Feltwell T."/>
            <person name="Hance Z."/>
            <person name="Harris B."/>
            <person name="Hauser H."/>
            <person name="Holroyd S."/>
            <person name="Jagels K."/>
            <person name="James K.D."/>
            <person name="Lennard N."/>
            <person name="Line A."/>
            <person name="Mayes R."/>
            <person name="Moule S."/>
            <person name="Mungall K."/>
            <person name="Ormond D."/>
            <person name="Quail M.A."/>
            <person name="Rabbinowitsch E."/>
            <person name="Rutherford K.M."/>
            <person name="Sanders M."/>
            <person name="Sharp S."/>
            <person name="Simmonds M."/>
            <person name="Stevens K."/>
            <person name="Whitehead S."/>
            <person name="Barrell B.G."/>
            <person name="Spratt B.G."/>
            <person name="Parkhill J."/>
        </authorList>
    </citation>
    <scope>NUCLEOTIDE SEQUENCE [LARGE SCALE GENOMIC DNA]</scope>
    <source>
        <strain>MSSA476</strain>
    </source>
</reference>
<comment type="function">
    <text evidence="1">Transfers and isomerizes the ribose moiety from AdoMet to the 7-aminomethyl group of 7-deazaguanine (preQ1-tRNA) to give epoxyqueuosine (oQ-tRNA).</text>
</comment>
<comment type="catalytic activity">
    <reaction evidence="1">
        <text>7-aminomethyl-7-carbaguanosine(34) in tRNA + S-adenosyl-L-methionine = epoxyqueuosine(34) in tRNA + adenine + L-methionine + 2 H(+)</text>
        <dbReference type="Rhea" id="RHEA:32155"/>
        <dbReference type="Rhea" id="RHEA-COMP:10342"/>
        <dbReference type="Rhea" id="RHEA-COMP:18582"/>
        <dbReference type="ChEBI" id="CHEBI:15378"/>
        <dbReference type="ChEBI" id="CHEBI:16708"/>
        <dbReference type="ChEBI" id="CHEBI:57844"/>
        <dbReference type="ChEBI" id="CHEBI:59789"/>
        <dbReference type="ChEBI" id="CHEBI:82833"/>
        <dbReference type="ChEBI" id="CHEBI:194443"/>
        <dbReference type="EC" id="2.4.99.17"/>
    </reaction>
</comment>
<comment type="pathway">
    <text evidence="1">tRNA modification; tRNA-queuosine biosynthesis.</text>
</comment>
<comment type="subunit">
    <text evidence="1">Monomer.</text>
</comment>
<comment type="subcellular location">
    <subcellularLocation>
        <location evidence="1">Cytoplasm</location>
    </subcellularLocation>
</comment>
<comment type="similarity">
    <text evidence="1">Belongs to the QueA family.</text>
</comment>
<sequence>MNIEEFDYDLPESLIAQTPLKDRDHSRLLVMDRETGEMKHLHFKDIIEYFRPGDTLVLNDTRVMPARLFGLKEETGAKVEMLMLTQIEGNDWEVLLKPAKRIKVGNKLNFGNGKIIAECIKEMDQGGRIMRLHYEGILQERLDELGEMPLPPYIKERLDDPDRYQTVYAKESGSAAAPTAGLHFTDELLTEIKNKGVNIAFVTLHVGLGTFRPVSVDDVNDHEMHSEYYQMTQETADLLNDTKSKGHRIISVGTTSTRTLETIRRDHDKFVETSGWTNIFIYPGFDFKAIDGQITNFHLPKSTLVMLVSAFSTRENVLNAYKTAVNLEYRFFSFGDAMLII</sequence>
<proteinExistence type="inferred from homology"/>